<name>CCMF_HAEIN</name>
<comment type="function">
    <text>Required for the biogenesis of c-type cytochromes. Possible subunit of a heme lyase.</text>
</comment>
<comment type="subcellular location">
    <subcellularLocation>
        <location evidence="2">Cell inner membrane</location>
        <topology evidence="2">Multi-pass membrane protein</topology>
    </subcellularLocation>
</comment>
<comment type="similarity">
    <text evidence="2">Belongs to the CcmF/CycK/Ccl1/NrfE/CcsA family.</text>
</comment>
<sequence length="648" mass="72353">MIAELGNYALALSLAVSLMLAIFPLWGAEKGNAQLMALARPMTYGLFASLSIAFAALFYLFAVNDFSVQYIVNNSNTTLPIYYRLSAVWGSHEGSLLLWIWLLAVWSFAVALLSKHLPQEAVARVLGIMGIISVGFVLFVLFTSNPFTRTFPDFPVDGKELNPMLQDVGLIFHPPLLYMGYVGFSVAFAFAIASLMTGKLDSAWARWSRPWTLAAWVFLTLGIVLGSWWAYYELGWGGWWFWDPVENSSFMPWLAGTALIHSLSVTEKRGSFKAWTVLLAILAFSLCLLGTFLVRSGILVSVHAFASDPTRGLYILAYLVVVIGGSLALYAYKGSQIRSRDNAERYSRESMLLLNNILLMTALCVVFLGTLLPLVHKQLGLGSISIGAPFFDQMFLIIMTPFALLLGIGPLVKWRRDQFSAIRTPVVICVFVMLIAGFALPYFLQDKITVSSVLGSMMTVIIALLALYELQQRATHRESFFVGVRKLSRSHWGMMLAHLGVAMTVWGIAFSQNFSVERDVRMKVGESAQIGRYDFKFTGVTDENGPNYIGGKAQIDISKDGQPEASLFAEKRFYTVSRMSMTEAAIAGGLTRDLYVALGEKLEDNSWALRLYYKPFIRWIWIGGLFMALGGLLCMFDRRYRFNVLLKK</sequence>
<protein>
    <recommendedName>
        <fullName>Cytochrome c-type biogenesis protein CcmF</fullName>
    </recommendedName>
</protein>
<reference key="1">
    <citation type="journal article" date="1995" name="Science">
        <title>Whole-genome random sequencing and assembly of Haemophilus influenzae Rd.</title>
        <authorList>
            <person name="Fleischmann R.D."/>
            <person name="Adams M.D."/>
            <person name="White O."/>
            <person name="Clayton R.A."/>
            <person name="Kirkness E.F."/>
            <person name="Kerlavage A.R."/>
            <person name="Bult C.J."/>
            <person name="Tomb J.-F."/>
            <person name="Dougherty B.A."/>
            <person name="Merrick J.M."/>
            <person name="McKenney K."/>
            <person name="Sutton G.G."/>
            <person name="FitzHugh W."/>
            <person name="Fields C.A."/>
            <person name="Gocayne J.D."/>
            <person name="Scott J.D."/>
            <person name="Shirley R."/>
            <person name="Liu L.-I."/>
            <person name="Glodek A."/>
            <person name="Kelley J.M."/>
            <person name="Weidman J.F."/>
            <person name="Phillips C.A."/>
            <person name="Spriggs T."/>
            <person name="Hedblom E."/>
            <person name="Cotton M.D."/>
            <person name="Utterback T.R."/>
            <person name="Hanna M.C."/>
            <person name="Nguyen D.T."/>
            <person name="Saudek D.M."/>
            <person name="Brandon R.C."/>
            <person name="Fine L.D."/>
            <person name="Fritchman J.L."/>
            <person name="Fuhrmann J.L."/>
            <person name="Geoghagen N.S.M."/>
            <person name="Gnehm C.L."/>
            <person name="McDonald L.A."/>
            <person name="Small K.V."/>
            <person name="Fraser C.M."/>
            <person name="Smith H.O."/>
            <person name="Venter J.C."/>
        </authorList>
    </citation>
    <scope>NUCLEOTIDE SEQUENCE [LARGE SCALE GENOMIC DNA]</scope>
    <source>
        <strain>ATCC 51907 / DSM 11121 / KW20 / Rd</strain>
    </source>
</reference>
<proteinExistence type="inferred from homology"/>
<dbReference type="EMBL" id="L42023">
    <property type="protein sequence ID" value="AAC22751.1"/>
    <property type="molecule type" value="Genomic_DNA"/>
</dbReference>
<dbReference type="PIR" id="A64167">
    <property type="entry name" value="A64167"/>
</dbReference>
<dbReference type="RefSeq" id="NP_439251.1">
    <property type="nucleotide sequence ID" value="NC_000907.1"/>
</dbReference>
<dbReference type="SMR" id="P45037"/>
<dbReference type="STRING" id="71421.HI_1094"/>
<dbReference type="EnsemblBacteria" id="AAC22751">
    <property type="protein sequence ID" value="AAC22751"/>
    <property type="gene ID" value="HI_1094"/>
</dbReference>
<dbReference type="KEGG" id="hin:HI_1094"/>
<dbReference type="PATRIC" id="fig|71421.8.peg.1139"/>
<dbReference type="eggNOG" id="COG1138">
    <property type="taxonomic scope" value="Bacteria"/>
</dbReference>
<dbReference type="HOGENOM" id="CLU_015041_3_0_6"/>
<dbReference type="OrthoDB" id="9761451at2"/>
<dbReference type="PhylomeDB" id="P45037"/>
<dbReference type="BioCyc" id="HINF71421:G1GJ1-1129-MONOMER"/>
<dbReference type="Proteomes" id="UP000000579">
    <property type="component" value="Chromosome"/>
</dbReference>
<dbReference type="GO" id="GO:0005886">
    <property type="term" value="C:plasma membrane"/>
    <property type="evidence" value="ECO:0007669"/>
    <property type="project" value="UniProtKB-SubCell"/>
</dbReference>
<dbReference type="GO" id="GO:0020037">
    <property type="term" value="F:heme binding"/>
    <property type="evidence" value="ECO:0007669"/>
    <property type="project" value="InterPro"/>
</dbReference>
<dbReference type="GO" id="GO:0015232">
    <property type="term" value="F:heme transmembrane transporter activity"/>
    <property type="evidence" value="ECO:0007669"/>
    <property type="project" value="InterPro"/>
</dbReference>
<dbReference type="GO" id="GO:0017004">
    <property type="term" value="P:cytochrome complex assembly"/>
    <property type="evidence" value="ECO:0007669"/>
    <property type="project" value="UniProtKB-KW"/>
</dbReference>
<dbReference type="InterPro" id="IPR032523">
    <property type="entry name" value="CcmF_C"/>
</dbReference>
<dbReference type="InterPro" id="IPR002541">
    <property type="entry name" value="Cyt_c_assembly"/>
</dbReference>
<dbReference type="InterPro" id="IPR003567">
    <property type="entry name" value="Cyt_c_biogenesis"/>
</dbReference>
<dbReference type="InterPro" id="IPR003568">
    <property type="entry name" value="Cyt_c_biogenesis_CcmF"/>
</dbReference>
<dbReference type="NCBIfam" id="TIGR00353">
    <property type="entry name" value="nrfE"/>
    <property type="match status" value="1"/>
</dbReference>
<dbReference type="NCBIfam" id="NF007691">
    <property type="entry name" value="PRK10369.1"/>
    <property type="match status" value="1"/>
</dbReference>
<dbReference type="PANTHER" id="PTHR43653">
    <property type="entry name" value="CYTOCHROME C ASSEMBLY PROTEIN-RELATED"/>
    <property type="match status" value="1"/>
</dbReference>
<dbReference type="PANTHER" id="PTHR43653:SF1">
    <property type="entry name" value="CYTOCHROME C-TYPE BIOGENESIS PROTEIN CCMF"/>
    <property type="match status" value="1"/>
</dbReference>
<dbReference type="Pfam" id="PF16327">
    <property type="entry name" value="CcmF_C"/>
    <property type="match status" value="1"/>
</dbReference>
<dbReference type="Pfam" id="PF01578">
    <property type="entry name" value="Cytochrom_C_asm"/>
    <property type="match status" value="1"/>
</dbReference>
<dbReference type="PRINTS" id="PR01410">
    <property type="entry name" value="CCBIOGENESIS"/>
</dbReference>
<dbReference type="PRINTS" id="PR01411">
    <property type="entry name" value="CCMFBIOGNSIS"/>
</dbReference>
<accession>P45037</accession>
<organism>
    <name type="scientific">Haemophilus influenzae (strain ATCC 51907 / DSM 11121 / KW20 / Rd)</name>
    <dbReference type="NCBI Taxonomy" id="71421"/>
    <lineage>
        <taxon>Bacteria</taxon>
        <taxon>Pseudomonadati</taxon>
        <taxon>Pseudomonadota</taxon>
        <taxon>Gammaproteobacteria</taxon>
        <taxon>Pasteurellales</taxon>
        <taxon>Pasteurellaceae</taxon>
        <taxon>Haemophilus</taxon>
    </lineage>
</organism>
<gene>
    <name type="primary">ccmF</name>
    <name type="ordered locus">HI_1094</name>
</gene>
<keyword id="KW-0997">Cell inner membrane</keyword>
<keyword id="KW-1003">Cell membrane</keyword>
<keyword id="KW-0201">Cytochrome c-type biogenesis</keyword>
<keyword id="KW-0472">Membrane</keyword>
<keyword id="KW-1185">Reference proteome</keyword>
<keyword id="KW-0812">Transmembrane</keyword>
<keyword id="KW-1133">Transmembrane helix</keyword>
<evidence type="ECO:0000255" key="1"/>
<evidence type="ECO:0000305" key="2"/>
<feature type="chain" id="PRO_0000201584" description="Cytochrome c-type biogenesis protein CcmF">
    <location>
        <begin position="1"/>
        <end position="648"/>
    </location>
</feature>
<feature type="transmembrane region" description="Helical" evidence="1">
    <location>
        <begin position="8"/>
        <end position="28"/>
    </location>
</feature>
<feature type="transmembrane region" description="Helical" evidence="1">
    <location>
        <begin position="43"/>
        <end position="63"/>
    </location>
</feature>
<feature type="transmembrane region" description="Helical" evidence="1">
    <location>
        <begin position="94"/>
        <end position="114"/>
    </location>
</feature>
<feature type="transmembrane region" description="Helical" evidence="1">
    <location>
        <begin position="122"/>
        <end position="142"/>
    </location>
</feature>
<feature type="transmembrane region" description="Helical" evidence="1">
    <location>
        <begin position="176"/>
        <end position="196"/>
    </location>
</feature>
<feature type="transmembrane region" description="Helical" evidence="1">
    <location>
        <begin position="211"/>
        <end position="231"/>
    </location>
</feature>
<feature type="transmembrane region" description="Helical" evidence="1">
    <location>
        <begin position="274"/>
        <end position="294"/>
    </location>
</feature>
<feature type="transmembrane region" description="Helical" evidence="1">
    <location>
        <begin position="312"/>
        <end position="332"/>
    </location>
</feature>
<feature type="transmembrane region" description="Helical" evidence="1">
    <location>
        <begin position="352"/>
        <end position="372"/>
    </location>
</feature>
<feature type="transmembrane region" description="Helical" evidence="1">
    <location>
        <begin position="394"/>
        <end position="414"/>
    </location>
</feature>
<feature type="transmembrane region" description="Helical" evidence="1">
    <location>
        <begin position="424"/>
        <end position="444"/>
    </location>
</feature>
<feature type="transmembrane region" description="Helical" evidence="1">
    <location>
        <begin position="448"/>
        <end position="468"/>
    </location>
</feature>
<feature type="transmembrane region" description="Helical" evidence="1">
    <location>
        <begin position="490"/>
        <end position="510"/>
    </location>
</feature>
<feature type="transmembrane region" description="Helical" evidence="1">
    <location>
        <begin position="616"/>
        <end position="636"/>
    </location>
</feature>